<feature type="chain" id="PRO_0000061369" description="Cytochrome b">
    <location>
        <begin position="1"/>
        <end position="380"/>
    </location>
</feature>
<feature type="transmembrane region" description="Helical" evidence="2">
    <location>
        <begin position="34"/>
        <end position="54"/>
    </location>
</feature>
<feature type="transmembrane region" description="Helical" evidence="2">
    <location>
        <begin position="78"/>
        <end position="99"/>
    </location>
</feature>
<feature type="transmembrane region" description="Helical" evidence="2">
    <location>
        <begin position="114"/>
        <end position="134"/>
    </location>
</feature>
<feature type="transmembrane region" description="Helical" evidence="2">
    <location>
        <begin position="179"/>
        <end position="199"/>
    </location>
</feature>
<feature type="transmembrane region" description="Helical" evidence="2">
    <location>
        <begin position="227"/>
        <end position="247"/>
    </location>
</feature>
<feature type="transmembrane region" description="Helical" evidence="2">
    <location>
        <begin position="289"/>
        <end position="309"/>
    </location>
</feature>
<feature type="transmembrane region" description="Helical" evidence="2">
    <location>
        <begin position="321"/>
        <end position="341"/>
    </location>
</feature>
<feature type="transmembrane region" description="Helical" evidence="2">
    <location>
        <begin position="348"/>
        <end position="368"/>
    </location>
</feature>
<feature type="binding site" description="axial binding residue" evidence="2">
    <location>
        <position position="84"/>
    </location>
    <ligand>
        <name>heme b</name>
        <dbReference type="ChEBI" id="CHEBI:60344"/>
        <label>b562</label>
    </ligand>
    <ligandPart>
        <name>Fe</name>
        <dbReference type="ChEBI" id="CHEBI:18248"/>
    </ligandPart>
</feature>
<feature type="binding site" description="axial binding residue" evidence="2">
    <location>
        <position position="98"/>
    </location>
    <ligand>
        <name>heme b</name>
        <dbReference type="ChEBI" id="CHEBI:60344"/>
        <label>b566</label>
    </ligand>
    <ligandPart>
        <name>Fe</name>
        <dbReference type="ChEBI" id="CHEBI:18248"/>
    </ligandPart>
</feature>
<feature type="binding site" description="axial binding residue" evidence="2">
    <location>
        <position position="183"/>
    </location>
    <ligand>
        <name>heme b</name>
        <dbReference type="ChEBI" id="CHEBI:60344"/>
        <label>b562</label>
    </ligand>
    <ligandPart>
        <name>Fe</name>
        <dbReference type="ChEBI" id="CHEBI:18248"/>
    </ligandPart>
</feature>
<feature type="binding site" description="axial binding residue" evidence="2">
    <location>
        <position position="197"/>
    </location>
    <ligand>
        <name>heme b</name>
        <dbReference type="ChEBI" id="CHEBI:60344"/>
        <label>b566</label>
    </ligand>
    <ligandPart>
        <name>Fe</name>
        <dbReference type="ChEBI" id="CHEBI:18248"/>
    </ligandPart>
</feature>
<feature type="binding site" evidence="2">
    <location>
        <position position="202"/>
    </location>
    <ligand>
        <name>a ubiquinone</name>
        <dbReference type="ChEBI" id="CHEBI:16389"/>
    </ligand>
</feature>
<feature type="sequence conflict" description="In Ref. 2; AAB57663." evidence="5" ref="2">
    <original>T</original>
    <variation>M</variation>
    <location>
        <position position="307"/>
    </location>
</feature>
<feature type="sequence conflict" description="In Ref. 2; AAB57663." evidence="5" ref="2">
    <original>R</original>
    <variation>P</variation>
    <location>
        <position position="314"/>
    </location>
</feature>
<name>CYB_PELSU</name>
<accession>O79680</accession>
<accession>O03332</accession>
<evidence type="ECO:0000250" key="1"/>
<evidence type="ECO:0000250" key="2">
    <source>
        <dbReference type="UniProtKB" id="P00157"/>
    </source>
</evidence>
<evidence type="ECO:0000255" key="3">
    <source>
        <dbReference type="PROSITE-ProRule" id="PRU00967"/>
    </source>
</evidence>
<evidence type="ECO:0000255" key="4">
    <source>
        <dbReference type="PROSITE-ProRule" id="PRU00968"/>
    </source>
</evidence>
<evidence type="ECO:0000305" key="5"/>
<comment type="function">
    <text evidence="2">Component of the ubiquinol-cytochrome c reductase complex (complex III or cytochrome b-c1 complex) that is part of the mitochondrial respiratory chain. The b-c1 complex mediates electron transfer from ubiquinol to cytochrome c. Contributes to the generation of a proton gradient across the mitochondrial membrane that is then used for ATP synthesis.</text>
</comment>
<comment type="cofactor">
    <cofactor evidence="2">
        <name>heme b</name>
        <dbReference type="ChEBI" id="CHEBI:60344"/>
    </cofactor>
    <text evidence="2">Binds 2 heme b groups non-covalently.</text>
</comment>
<comment type="subunit">
    <text evidence="2">The cytochrome bc1 complex contains 3 respiratory subunits (MT-CYB, CYC1 and UQCRFS1), 2 core proteins (UQCRC1 and UQCRC2) and probably 6 low-molecular weight proteins.</text>
</comment>
<comment type="subcellular location">
    <subcellularLocation>
        <location evidence="2">Mitochondrion inner membrane</location>
        <topology evidence="2">Multi-pass membrane protein</topology>
    </subcellularLocation>
</comment>
<comment type="miscellaneous">
    <text evidence="1">Heme 1 (or BL or b562) is low-potential and absorbs at about 562 nm, and heme 2 (or BH or b566) is high-potential and absorbs at about 566 nm.</text>
</comment>
<comment type="similarity">
    <text evidence="3 4">Belongs to the cytochrome b family.</text>
</comment>
<comment type="caution">
    <text evidence="2">The full-length protein contains only eight transmembrane helices, not nine as predicted by bioinformatics tools.</text>
</comment>
<protein>
    <recommendedName>
        <fullName>Cytochrome b</fullName>
    </recommendedName>
    <alternativeName>
        <fullName>Complex III subunit 3</fullName>
    </alternativeName>
    <alternativeName>
        <fullName>Complex III subunit III</fullName>
    </alternativeName>
    <alternativeName>
        <fullName>Cytochrome b-c1 complex subunit 3</fullName>
    </alternativeName>
    <alternativeName>
        <fullName>Ubiquinol-cytochrome-c reductase complex cytochrome b subunit</fullName>
    </alternativeName>
</protein>
<reference key="1">
    <citation type="journal article" date="1998" name="Proc. Natl. Acad. Sci. U.S.A.">
        <title>Complete mitochondrial genome suggests diapsid affinities of turtles.</title>
        <authorList>
            <person name="Zardoya R."/>
            <person name="Meyer A."/>
        </authorList>
    </citation>
    <scope>NUCLEOTIDE SEQUENCE [GENOMIC DNA]</scope>
</reference>
<reference key="2">
    <citation type="journal article" date="1997" name="Syst. Biol.">
        <title>Tests of turtle phylogeny: molecular, morphological, and paleontological approaches.</title>
        <authorList>
            <person name="Shaffer H.B."/>
            <person name="Meylan P."/>
            <person name="McKnight M.L."/>
        </authorList>
    </citation>
    <scope>NUCLEOTIDE SEQUENCE [GENOMIC DNA] OF 28-324</scope>
</reference>
<organism>
    <name type="scientific">Pelomedusa subrufa</name>
    <name type="common">African side-necked turtle</name>
    <dbReference type="NCBI Taxonomy" id="44522"/>
    <lineage>
        <taxon>Eukaryota</taxon>
        <taxon>Metazoa</taxon>
        <taxon>Chordata</taxon>
        <taxon>Craniata</taxon>
        <taxon>Vertebrata</taxon>
        <taxon>Euteleostomi</taxon>
        <taxon>Archelosauria</taxon>
        <taxon>Testudinata</taxon>
        <taxon>Testudines</taxon>
        <taxon>Pleurodira</taxon>
        <taxon>Pelomedusidae</taxon>
        <taxon>Pelomedusa</taxon>
    </lineage>
</organism>
<keyword id="KW-0249">Electron transport</keyword>
<keyword id="KW-0349">Heme</keyword>
<keyword id="KW-0408">Iron</keyword>
<keyword id="KW-0472">Membrane</keyword>
<keyword id="KW-0479">Metal-binding</keyword>
<keyword id="KW-0496">Mitochondrion</keyword>
<keyword id="KW-0999">Mitochondrion inner membrane</keyword>
<keyword id="KW-0679">Respiratory chain</keyword>
<keyword id="KW-0812">Transmembrane</keyword>
<keyword id="KW-1133">Transmembrane helix</keyword>
<keyword id="KW-0813">Transport</keyword>
<keyword id="KW-0830">Ubiquinone</keyword>
<proteinExistence type="inferred from homology"/>
<geneLocation type="mitochondrion"/>
<sequence>MGTLHLKQNPLLKITNKSLINLPSPSNISAWWNFGSLLGMCLILQITTGIFLAMHYTPNITTAFSSVAHITRDVQYGWLLRGLHANGASIFFICLYFHIGRGIYYGSFLNKKTWYTGIMLLFLTMATAFMGYILPWGQMSFWGATVITNLLSAIPYMGTNLVQWIWGGFSVDNATLTRFFTLHFLTPFIISSLTTIHLLLLHEKGSNNPTGLNSNPDKIPFHPYFSYKDLLGVNLLMIGLLTLTLFLPNLLTDPENFTPANPLSTPKHIKPEWYFLFAYAILRSIPNKLGGVLALLSSVTILFIMPTLHTSKQRSATFRPFTQILFWSPTADLVILTWIGAQPVEDPFIMIGQTASVFYFTLILLLIPLAAILENKLLDY</sequence>
<gene>
    <name type="primary">MT-CYB</name>
    <name type="synonym">COB</name>
    <name type="synonym">CYTB</name>
    <name type="synonym">MTCYB</name>
</gene>
<dbReference type="EMBL" id="AF039066">
    <property type="protein sequence ID" value="AAD05060.1"/>
    <property type="molecule type" value="Genomic_DNA"/>
</dbReference>
<dbReference type="EMBL" id="U81346">
    <property type="protein sequence ID" value="AAB57663.1"/>
    <property type="molecule type" value="Genomic_DNA"/>
</dbReference>
<dbReference type="PIR" id="T11113">
    <property type="entry name" value="T11113"/>
</dbReference>
<dbReference type="RefSeq" id="NP_008444.1">
    <property type="nucleotide sequence ID" value="NC_001947.1"/>
</dbReference>
<dbReference type="SMR" id="O79680"/>
<dbReference type="GeneID" id="808280"/>
<dbReference type="CTD" id="4519"/>
<dbReference type="GO" id="GO:0005743">
    <property type="term" value="C:mitochondrial inner membrane"/>
    <property type="evidence" value="ECO:0007669"/>
    <property type="project" value="UniProtKB-SubCell"/>
</dbReference>
<dbReference type="GO" id="GO:0045275">
    <property type="term" value="C:respiratory chain complex III"/>
    <property type="evidence" value="ECO:0007669"/>
    <property type="project" value="InterPro"/>
</dbReference>
<dbReference type="GO" id="GO:0046872">
    <property type="term" value="F:metal ion binding"/>
    <property type="evidence" value="ECO:0007669"/>
    <property type="project" value="UniProtKB-KW"/>
</dbReference>
<dbReference type="GO" id="GO:0008121">
    <property type="term" value="F:ubiquinol-cytochrome-c reductase activity"/>
    <property type="evidence" value="ECO:0007669"/>
    <property type="project" value="InterPro"/>
</dbReference>
<dbReference type="GO" id="GO:0006122">
    <property type="term" value="P:mitochondrial electron transport, ubiquinol to cytochrome c"/>
    <property type="evidence" value="ECO:0007669"/>
    <property type="project" value="TreeGrafter"/>
</dbReference>
<dbReference type="CDD" id="cd00290">
    <property type="entry name" value="cytochrome_b_C"/>
    <property type="match status" value="1"/>
</dbReference>
<dbReference type="CDD" id="cd00284">
    <property type="entry name" value="Cytochrome_b_N"/>
    <property type="match status" value="1"/>
</dbReference>
<dbReference type="FunFam" id="1.20.810.10:FF:000002">
    <property type="entry name" value="Cytochrome b"/>
    <property type="match status" value="1"/>
</dbReference>
<dbReference type="Gene3D" id="1.20.810.10">
    <property type="entry name" value="Cytochrome Bc1 Complex, Chain C"/>
    <property type="match status" value="1"/>
</dbReference>
<dbReference type="InterPro" id="IPR005798">
    <property type="entry name" value="Cyt_b/b6_C"/>
</dbReference>
<dbReference type="InterPro" id="IPR036150">
    <property type="entry name" value="Cyt_b/b6_C_sf"/>
</dbReference>
<dbReference type="InterPro" id="IPR005797">
    <property type="entry name" value="Cyt_b/b6_N"/>
</dbReference>
<dbReference type="InterPro" id="IPR027387">
    <property type="entry name" value="Cytb/b6-like_sf"/>
</dbReference>
<dbReference type="InterPro" id="IPR030689">
    <property type="entry name" value="Cytochrome_b"/>
</dbReference>
<dbReference type="InterPro" id="IPR048260">
    <property type="entry name" value="Cytochrome_b_C_euk/bac"/>
</dbReference>
<dbReference type="InterPro" id="IPR048259">
    <property type="entry name" value="Cytochrome_b_N_euk/bac"/>
</dbReference>
<dbReference type="InterPro" id="IPR016174">
    <property type="entry name" value="Di-haem_cyt_TM"/>
</dbReference>
<dbReference type="PANTHER" id="PTHR19271">
    <property type="entry name" value="CYTOCHROME B"/>
    <property type="match status" value="1"/>
</dbReference>
<dbReference type="PANTHER" id="PTHR19271:SF16">
    <property type="entry name" value="CYTOCHROME B"/>
    <property type="match status" value="1"/>
</dbReference>
<dbReference type="Pfam" id="PF00032">
    <property type="entry name" value="Cytochrom_B_C"/>
    <property type="match status" value="1"/>
</dbReference>
<dbReference type="Pfam" id="PF00033">
    <property type="entry name" value="Cytochrome_B"/>
    <property type="match status" value="1"/>
</dbReference>
<dbReference type="PIRSF" id="PIRSF038885">
    <property type="entry name" value="COB"/>
    <property type="match status" value="1"/>
</dbReference>
<dbReference type="SUPFAM" id="SSF81648">
    <property type="entry name" value="a domain/subunit of cytochrome bc1 complex (Ubiquinol-cytochrome c reductase)"/>
    <property type="match status" value="1"/>
</dbReference>
<dbReference type="SUPFAM" id="SSF81342">
    <property type="entry name" value="Transmembrane di-heme cytochromes"/>
    <property type="match status" value="1"/>
</dbReference>
<dbReference type="PROSITE" id="PS51003">
    <property type="entry name" value="CYTB_CTER"/>
    <property type="match status" value="1"/>
</dbReference>
<dbReference type="PROSITE" id="PS51002">
    <property type="entry name" value="CYTB_NTER"/>
    <property type="match status" value="1"/>
</dbReference>